<comment type="function">
    <text evidence="2 3">Linker histones are implicated in chromatin remodeling and/or transcriptional regulation during spermiogenesis, the process of spermatid maturation into spermatozoa. Protamines substitute for histones in the chromatin of sperm during the haploid phase of spermatogenesis. They compact sperm DNA into a highly condensed, stable and inactive complex (By similarity).</text>
</comment>
<comment type="subcellular location">
    <subcellularLocation>
        <location evidence="4">Nucleus</location>
    </subcellularLocation>
    <subcellularLocation>
        <location evidence="4">Chromosome</location>
    </subcellularLocation>
</comment>
<comment type="tissue specificity">
    <text evidence="6">Sperm.</text>
</comment>
<comment type="PTM">
    <text evidence="6">OE2 and OE3 are produced by post-translational cleavage of a common precursor.</text>
</comment>
<name>H1L2_OSTED</name>
<feature type="chain" id="PRO_0000013162" description="Sperm-specific protein OE2" evidence="1">
    <location>
        <begin position="1" status="less than"/>
        <end position="112"/>
    </location>
</feature>
<feature type="chain" id="PRO_0000013163" description="Sperm-specific protein OE3" evidence="1">
    <location>
        <begin position="113"/>
        <end position="126" status="greater than"/>
    </location>
</feature>
<feature type="domain" description="H15" evidence="4">
    <location>
        <begin position="5"/>
        <end position="84"/>
    </location>
</feature>
<feature type="region of interest" description="Disordered" evidence="5">
    <location>
        <begin position="74"/>
        <end position="126"/>
    </location>
</feature>
<feature type="compositionally biased region" description="Basic residues" evidence="5">
    <location>
        <begin position="90"/>
        <end position="120"/>
    </location>
</feature>
<feature type="sequence conflict" description="In Ref. 1; AA sequence." evidence="7" ref="1">
    <original>L</original>
    <variation>A</variation>
    <location>
        <position position="53"/>
    </location>
</feature>
<feature type="sequence conflict" description="In Ref. 1; AA sequence." evidence="7" ref="1">
    <original>V</original>
    <variation>A</variation>
    <location>
        <position position="63"/>
    </location>
</feature>
<feature type="sequence conflict" description="In Ref. 1; AA sequence." evidence="7" ref="1">
    <original>L</original>
    <variation>P</variation>
    <location>
        <position position="67"/>
    </location>
</feature>
<feature type="sequence conflict" description="In Ref. 1; AA sequence." evidence="7" ref="1">
    <original>T</original>
    <variation>G</variation>
    <location>
        <position position="69"/>
    </location>
</feature>
<feature type="non-terminal residue" evidence="8">
    <location>
        <position position="1"/>
    </location>
</feature>
<feature type="non-terminal residue" evidence="8">
    <location>
        <position position="126"/>
    </location>
</feature>
<sequence length="126" mass="13007">AGGVKKPTTLSMIVAAITAMKNRKGSSVQAIRKYILANNKGINTSHLGSAMKLAFAKGLKSGVLVRLKTSAGASGATGSFRVGKAPASPKKAKKAKSPKKKSSKKSKNKSNNAKAKKSPKKKADSN</sequence>
<protein>
    <recommendedName>
        <fullName>Sperm-specific H1/protamine-like protein type 2</fullName>
    </recommendedName>
    <component>
        <recommendedName>
            <fullName>Sperm-specific protein OE2</fullName>
        </recommendedName>
        <alternativeName>
            <fullName>Sperm-specific linker histone H1-like protein OE2</fullName>
        </alternativeName>
    </component>
    <component>
        <recommendedName>
            <fullName>Sperm-specific protein OE3</fullName>
        </recommendedName>
        <alternativeName>
            <fullName>Protamine-like OS3</fullName>
        </alternativeName>
    </component>
</protein>
<dbReference type="EMBL" id="AY182774">
    <property type="protein sequence ID" value="AAO16248.1"/>
    <property type="molecule type" value="mRNA"/>
</dbReference>
<dbReference type="SMR" id="Q86QI0"/>
<dbReference type="GO" id="GO:0000786">
    <property type="term" value="C:nucleosome"/>
    <property type="evidence" value="ECO:0007669"/>
    <property type="project" value="UniProtKB-KW"/>
</dbReference>
<dbReference type="GO" id="GO:0005634">
    <property type="term" value="C:nucleus"/>
    <property type="evidence" value="ECO:0007669"/>
    <property type="project" value="UniProtKB-SubCell"/>
</dbReference>
<dbReference type="GO" id="GO:0003690">
    <property type="term" value="F:double-stranded DNA binding"/>
    <property type="evidence" value="ECO:0007669"/>
    <property type="project" value="TreeGrafter"/>
</dbReference>
<dbReference type="GO" id="GO:0031492">
    <property type="term" value="F:nucleosomal DNA binding"/>
    <property type="evidence" value="ECO:0007669"/>
    <property type="project" value="TreeGrafter"/>
</dbReference>
<dbReference type="GO" id="GO:0030527">
    <property type="term" value="F:structural constituent of chromatin"/>
    <property type="evidence" value="ECO:0007669"/>
    <property type="project" value="InterPro"/>
</dbReference>
<dbReference type="GO" id="GO:0030154">
    <property type="term" value="P:cell differentiation"/>
    <property type="evidence" value="ECO:0007669"/>
    <property type="project" value="UniProtKB-KW"/>
</dbReference>
<dbReference type="GO" id="GO:0030261">
    <property type="term" value="P:chromosome condensation"/>
    <property type="evidence" value="ECO:0007669"/>
    <property type="project" value="UniProtKB-KW"/>
</dbReference>
<dbReference type="GO" id="GO:0045910">
    <property type="term" value="P:negative regulation of DNA recombination"/>
    <property type="evidence" value="ECO:0007669"/>
    <property type="project" value="TreeGrafter"/>
</dbReference>
<dbReference type="GO" id="GO:0006334">
    <property type="term" value="P:nucleosome assembly"/>
    <property type="evidence" value="ECO:0007669"/>
    <property type="project" value="InterPro"/>
</dbReference>
<dbReference type="GO" id="GO:0007283">
    <property type="term" value="P:spermatogenesis"/>
    <property type="evidence" value="ECO:0007669"/>
    <property type="project" value="UniProtKB-KW"/>
</dbReference>
<dbReference type="CDD" id="cd00073">
    <property type="entry name" value="H15"/>
    <property type="match status" value="1"/>
</dbReference>
<dbReference type="Gene3D" id="1.10.10.10">
    <property type="entry name" value="Winged helix-like DNA-binding domain superfamily/Winged helix DNA-binding domain"/>
    <property type="match status" value="1"/>
</dbReference>
<dbReference type="InterPro" id="IPR005819">
    <property type="entry name" value="H1/H5"/>
</dbReference>
<dbReference type="InterPro" id="IPR005818">
    <property type="entry name" value="Histone_H1/H5_H15"/>
</dbReference>
<dbReference type="InterPro" id="IPR036388">
    <property type="entry name" value="WH-like_DNA-bd_sf"/>
</dbReference>
<dbReference type="InterPro" id="IPR036390">
    <property type="entry name" value="WH_DNA-bd_sf"/>
</dbReference>
<dbReference type="PANTHER" id="PTHR11467:SF36">
    <property type="entry name" value="HISTONE 24-RELATED"/>
    <property type="match status" value="1"/>
</dbReference>
<dbReference type="PANTHER" id="PTHR11467">
    <property type="entry name" value="HISTONE H1"/>
    <property type="match status" value="1"/>
</dbReference>
<dbReference type="Pfam" id="PF00538">
    <property type="entry name" value="Linker_histone"/>
    <property type="match status" value="1"/>
</dbReference>
<dbReference type="PRINTS" id="PR00624">
    <property type="entry name" value="HISTONEH5"/>
</dbReference>
<dbReference type="SMART" id="SM00526">
    <property type="entry name" value="H15"/>
    <property type="match status" value="1"/>
</dbReference>
<dbReference type="SUPFAM" id="SSF46785">
    <property type="entry name" value="Winged helix' DNA-binding domain"/>
    <property type="match status" value="1"/>
</dbReference>
<dbReference type="PROSITE" id="PS51504">
    <property type="entry name" value="H15"/>
    <property type="match status" value="1"/>
</dbReference>
<evidence type="ECO:0000250" key="1"/>
<evidence type="ECO:0000250" key="2">
    <source>
        <dbReference type="UniProtKB" id="P04553"/>
    </source>
</evidence>
<evidence type="ECO:0000250" key="3">
    <source>
        <dbReference type="UniProtKB" id="P60008"/>
    </source>
</evidence>
<evidence type="ECO:0000255" key="4">
    <source>
        <dbReference type="PROSITE-ProRule" id="PRU00837"/>
    </source>
</evidence>
<evidence type="ECO:0000256" key="5">
    <source>
        <dbReference type="SAM" id="MobiDB-lite"/>
    </source>
</evidence>
<evidence type="ECO:0000269" key="6">
    <source>
    </source>
</evidence>
<evidence type="ECO:0000305" key="7"/>
<evidence type="ECO:0000312" key="8">
    <source>
        <dbReference type="EMBL" id="AAO16248.1"/>
    </source>
</evidence>
<organism evidence="8">
    <name type="scientific">Ostrea edulis</name>
    <name type="common">Native oyster</name>
    <name type="synonym">European flat oyster</name>
    <dbReference type="NCBI Taxonomy" id="37623"/>
    <lineage>
        <taxon>Eukaryota</taxon>
        <taxon>Metazoa</taxon>
        <taxon>Spiralia</taxon>
        <taxon>Lophotrochozoa</taxon>
        <taxon>Mollusca</taxon>
        <taxon>Bivalvia</taxon>
        <taxon>Autobranchia</taxon>
        <taxon>Pteriomorphia</taxon>
        <taxon>Ostreida</taxon>
        <taxon>Ostreoidea</taxon>
        <taxon>Ostreidae</taxon>
        <taxon>Ostrea</taxon>
    </lineage>
</organism>
<reference evidence="7" key="1">
    <citation type="journal article" date="2004" name="Biochim. Biophys. Acta">
        <title>The sperm-specific proteins of the edible oyster (European flat oyster (Ostrea edulis)) are products of proteolytic processing.</title>
        <authorList>
            <person name="Agelopoulou B."/>
            <person name="Cary P.D."/>
            <person name="Pataryas T."/>
            <person name="Aleporou-Marinou V."/>
            <person name="Crane-Robinson C."/>
        </authorList>
    </citation>
    <scope>NUCLEOTIDE SEQUENCE [MRNA]</scope>
    <scope>PROTEIN SEQUENCE OF 51-70</scope>
    <scope>TISSUE SPECIFICITY</scope>
    <source>
        <tissue evidence="8">Sperm</tissue>
    </source>
</reference>
<accession>Q86QI0</accession>
<proteinExistence type="evidence at protein level"/>
<keyword id="KW-0158">Chromosome</keyword>
<keyword id="KW-0217">Developmental protein</keyword>
<keyword id="KW-0221">Differentiation</keyword>
<keyword id="KW-0903">Direct protein sequencing</keyword>
<keyword id="KW-0226">DNA condensation</keyword>
<keyword id="KW-0238">DNA-binding</keyword>
<keyword id="KW-0544">Nucleosome core</keyword>
<keyword id="KW-0539">Nucleus</keyword>
<keyword id="KW-0744">Spermatogenesis</keyword>